<comment type="function">
    <text evidence="1">One of several proteins that assist in the late maturation steps of the functional core of the 30S ribosomal subunit. Associates with free 30S ribosomal subunits (but not with 30S subunits that are part of 70S ribosomes or polysomes). Required for efficient processing of 16S rRNA. May interact with the 5'-terminal helix region of 16S rRNA.</text>
</comment>
<comment type="subunit">
    <text evidence="1">Monomer. Binds 30S ribosomal subunits, but not 50S ribosomal subunits or 70S ribosomes.</text>
</comment>
<comment type="subcellular location">
    <subcellularLocation>
        <location evidence="1">Cytoplasm</location>
    </subcellularLocation>
</comment>
<comment type="similarity">
    <text evidence="1">Belongs to the RbfA family.</text>
</comment>
<keyword id="KW-0963">Cytoplasm</keyword>
<keyword id="KW-1185">Reference proteome</keyword>
<keyword id="KW-0690">Ribosome biogenesis</keyword>
<accession>A6GW80</accession>
<gene>
    <name evidence="1" type="primary">rbfA</name>
    <name type="ordered locus">FP0238</name>
</gene>
<sequence>METNRQKKIGGVIQKDLVDILQGEIRKNGISNLVISVSKVSVTTDLGVARVYLSVFPQEKAPEILESIKSNMYLIKHDLSQRVRLQLRKVPNLAFYIDDSLDYIEKIDNALAGKENPIENRDLLEKRKKI</sequence>
<proteinExistence type="inferred from homology"/>
<reference key="1">
    <citation type="journal article" date="2007" name="Nat. Biotechnol.">
        <title>Complete genome sequence of the fish pathogen Flavobacterium psychrophilum.</title>
        <authorList>
            <person name="Duchaud E."/>
            <person name="Boussaha M."/>
            <person name="Loux V."/>
            <person name="Bernardet J.-F."/>
            <person name="Michel C."/>
            <person name="Kerouault B."/>
            <person name="Mondot S."/>
            <person name="Nicolas P."/>
            <person name="Bossy R."/>
            <person name="Caron C."/>
            <person name="Bessieres P."/>
            <person name="Gibrat J.-F."/>
            <person name="Claverol S."/>
            <person name="Dumetz F."/>
            <person name="Le Henaff M."/>
            <person name="Benmansour A."/>
        </authorList>
    </citation>
    <scope>NUCLEOTIDE SEQUENCE [LARGE SCALE GENOMIC DNA]</scope>
    <source>
        <strain>ATCC 49511 / DSM 21280 / CIP 103535 / JIP02/86</strain>
    </source>
</reference>
<feature type="chain" id="PRO_0000321221" description="Ribosome-binding factor A">
    <location>
        <begin position="1"/>
        <end position="130"/>
    </location>
</feature>
<name>RBFA_FLAPJ</name>
<protein>
    <recommendedName>
        <fullName evidence="1">Ribosome-binding factor A</fullName>
    </recommendedName>
</protein>
<dbReference type="EMBL" id="AM398681">
    <property type="protein sequence ID" value="CAL42353.1"/>
    <property type="molecule type" value="Genomic_DNA"/>
</dbReference>
<dbReference type="RefSeq" id="WP_011962413.1">
    <property type="nucleotide sequence ID" value="NC_009613.3"/>
</dbReference>
<dbReference type="RefSeq" id="YP_001295173.1">
    <property type="nucleotide sequence ID" value="NC_009613.3"/>
</dbReference>
<dbReference type="SMR" id="A6GW80"/>
<dbReference type="STRING" id="402612.FP0238"/>
<dbReference type="EnsemblBacteria" id="CAL42353">
    <property type="protein sequence ID" value="CAL42353"/>
    <property type="gene ID" value="FP0238"/>
</dbReference>
<dbReference type="GeneID" id="66553866"/>
<dbReference type="KEGG" id="fps:FP0238"/>
<dbReference type="PATRIC" id="fig|402612.5.peg.246"/>
<dbReference type="eggNOG" id="COG0858">
    <property type="taxonomic scope" value="Bacteria"/>
</dbReference>
<dbReference type="HOGENOM" id="CLU_089475_4_1_10"/>
<dbReference type="OrthoDB" id="9811910at2"/>
<dbReference type="Proteomes" id="UP000006394">
    <property type="component" value="Chromosome"/>
</dbReference>
<dbReference type="GO" id="GO:0005829">
    <property type="term" value="C:cytosol"/>
    <property type="evidence" value="ECO:0007669"/>
    <property type="project" value="TreeGrafter"/>
</dbReference>
<dbReference type="GO" id="GO:0043024">
    <property type="term" value="F:ribosomal small subunit binding"/>
    <property type="evidence" value="ECO:0007669"/>
    <property type="project" value="TreeGrafter"/>
</dbReference>
<dbReference type="GO" id="GO:0030490">
    <property type="term" value="P:maturation of SSU-rRNA"/>
    <property type="evidence" value="ECO:0007669"/>
    <property type="project" value="UniProtKB-UniRule"/>
</dbReference>
<dbReference type="Gene3D" id="3.30.300.20">
    <property type="match status" value="1"/>
</dbReference>
<dbReference type="HAMAP" id="MF_00003">
    <property type="entry name" value="RbfA"/>
    <property type="match status" value="1"/>
</dbReference>
<dbReference type="InterPro" id="IPR015946">
    <property type="entry name" value="KH_dom-like_a/b"/>
</dbReference>
<dbReference type="InterPro" id="IPR000238">
    <property type="entry name" value="RbfA"/>
</dbReference>
<dbReference type="InterPro" id="IPR023799">
    <property type="entry name" value="RbfA_dom_sf"/>
</dbReference>
<dbReference type="NCBIfam" id="TIGR00082">
    <property type="entry name" value="rbfA"/>
    <property type="match status" value="1"/>
</dbReference>
<dbReference type="PANTHER" id="PTHR33515">
    <property type="entry name" value="RIBOSOME-BINDING FACTOR A, CHLOROPLASTIC-RELATED"/>
    <property type="match status" value="1"/>
</dbReference>
<dbReference type="PANTHER" id="PTHR33515:SF1">
    <property type="entry name" value="RIBOSOME-BINDING FACTOR A, CHLOROPLASTIC-RELATED"/>
    <property type="match status" value="1"/>
</dbReference>
<dbReference type="Pfam" id="PF02033">
    <property type="entry name" value="RBFA"/>
    <property type="match status" value="1"/>
</dbReference>
<dbReference type="SUPFAM" id="SSF89919">
    <property type="entry name" value="Ribosome-binding factor A, RbfA"/>
    <property type="match status" value="1"/>
</dbReference>
<evidence type="ECO:0000255" key="1">
    <source>
        <dbReference type="HAMAP-Rule" id="MF_00003"/>
    </source>
</evidence>
<organism>
    <name type="scientific">Flavobacterium psychrophilum (strain ATCC 49511 / DSM 21280 / CIP 103535 / JIP02/86)</name>
    <dbReference type="NCBI Taxonomy" id="402612"/>
    <lineage>
        <taxon>Bacteria</taxon>
        <taxon>Pseudomonadati</taxon>
        <taxon>Bacteroidota</taxon>
        <taxon>Flavobacteriia</taxon>
        <taxon>Flavobacteriales</taxon>
        <taxon>Flavobacteriaceae</taxon>
        <taxon>Flavobacterium</taxon>
    </lineage>
</organism>